<dbReference type="EC" id="4.3.3.7" evidence="1"/>
<dbReference type="EMBL" id="CP001219">
    <property type="protein sequence ID" value="ACK78144.1"/>
    <property type="molecule type" value="Genomic_DNA"/>
</dbReference>
<dbReference type="RefSeq" id="WP_009561191.1">
    <property type="nucleotide sequence ID" value="NC_011761.1"/>
</dbReference>
<dbReference type="SMR" id="B7J6C4"/>
<dbReference type="STRING" id="243159.AFE_2358"/>
<dbReference type="PaxDb" id="243159-AFE_2358"/>
<dbReference type="GeneID" id="65281451"/>
<dbReference type="KEGG" id="afr:AFE_2358"/>
<dbReference type="eggNOG" id="COG0329">
    <property type="taxonomic scope" value="Bacteria"/>
</dbReference>
<dbReference type="HOGENOM" id="CLU_049343_7_1_6"/>
<dbReference type="UniPathway" id="UPA00034">
    <property type="reaction ID" value="UER00017"/>
</dbReference>
<dbReference type="Proteomes" id="UP000001362">
    <property type="component" value="Chromosome"/>
</dbReference>
<dbReference type="GO" id="GO:0005829">
    <property type="term" value="C:cytosol"/>
    <property type="evidence" value="ECO:0007669"/>
    <property type="project" value="TreeGrafter"/>
</dbReference>
<dbReference type="GO" id="GO:0008840">
    <property type="term" value="F:4-hydroxy-tetrahydrodipicolinate synthase activity"/>
    <property type="evidence" value="ECO:0007669"/>
    <property type="project" value="UniProtKB-UniRule"/>
</dbReference>
<dbReference type="GO" id="GO:0019877">
    <property type="term" value="P:diaminopimelate biosynthetic process"/>
    <property type="evidence" value="ECO:0007669"/>
    <property type="project" value="UniProtKB-UniRule"/>
</dbReference>
<dbReference type="GO" id="GO:0009089">
    <property type="term" value="P:lysine biosynthetic process via diaminopimelate"/>
    <property type="evidence" value="ECO:0007669"/>
    <property type="project" value="UniProtKB-UniRule"/>
</dbReference>
<dbReference type="CDD" id="cd00950">
    <property type="entry name" value="DHDPS"/>
    <property type="match status" value="1"/>
</dbReference>
<dbReference type="Gene3D" id="3.20.20.70">
    <property type="entry name" value="Aldolase class I"/>
    <property type="match status" value="1"/>
</dbReference>
<dbReference type="HAMAP" id="MF_00418">
    <property type="entry name" value="DapA"/>
    <property type="match status" value="1"/>
</dbReference>
<dbReference type="InterPro" id="IPR013785">
    <property type="entry name" value="Aldolase_TIM"/>
</dbReference>
<dbReference type="InterPro" id="IPR005263">
    <property type="entry name" value="DapA"/>
</dbReference>
<dbReference type="InterPro" id="IPR002220">
    <property type="entry name" value="DapA-like"/>
</dbReference>
<dbReference type="InterPro" id="IPR020625">
    <property type="entry name" value="Schiff_base-form_aldolases_AS"/>
</dbReference>
<dbReference type="InterPro" id="IPR020624">
    <property type="entry name" value="Schiff_base-form_aldolases_CS"/>
</dbReference>
<dbReference type="NCBIfam" id="TIGR00674">
    <property type="entry name" value="dapA"/>
    <property type="match status" value="1"/>
</dbReference>
<dbReference type="PANTHER" id="PTHR12128:SF66">
    <property type="entry name" value="4-HYDROXY-2-OXOGLUTARATE ALDOLASE, MITOCHONDRIAL"/>
    <property type="match status" value="1"/>
</dbReference>
<dbReference type="PANTHER" id="PTHR12128">
    <property type="entry name" value="DIHYDRODIPICOLINATE SYNTHASE"/>
    <property type="match status" value="1"/>
</dbReference>
<dbReference type="Pfam" id="PF00701">
    <property type="entry name" value="DHDPS"/>
    <property type="match status" value="1"/>
</dbReference>
<dbReference type="PIRSF" id="PIRSF001365">
    <property type="entry name" value="DHDPS"/>
    <property type="match status" value="1"/>
</dbReference>
<dbReference type="PRINTS" id="PR00146">
    <property type="entry name" value="DHPICSNTHASE"/>
</dbReference>
<dbReference type="SMART" id="SM01130">
    <property type="entry name" value="DHDPS"/>
    <property type="match status" value="1"/>
</dbReference>
<dbReference type="SUPFAM" id="SSF51569">
    <property type="entry name" value="Aldolase"/>
    <property type="match status" value="1"/>
</dbReference>
<dbReference type="PROSITE" id="PS00665">
    <property type="entry name" value="DHDPS_1"/>
    <property type="match status" value="1"/>
</dbReference>
<dbReference type="PROSITE" id="PS00666">
    <property type="entry name" value="DHDPS_2"/>
    <property type="match status" value="1"/>
</dbReference>
<sequence>MFHGSMVALVTPMQVDGAIDDVALRELVEWHIAEGTHALVAVGTTGESATLEMREHVAVIQTVVEQARGRVPVIAGTGANATHEAIELTRAAMEVKADAALLVSPYYNKPTQEGLFQHYSAIAEHCHFPIILYNVPGRTAGDILPETVARLAPRADIIGIKEASGKVERVAEILALCGDQVQVYSGDDGAALAAMALGARGVISVTANAAPRLMARMCDLALAGDFVGARAVNAQLTGLHRDLFLESNPIPVKWALHEMGRMESVLRLPLTTLSSVHHERLRESLRRAQCI</sequence>
<feature type="chain" id="PRO_1000124012" description="4-hydroxy-tetrahydrodipicolinate synthase">
    <location>
        <begin position="1"/>
        <end position="291"/>
    </location>
</feature>
<feature type="active site" description="Proton donor/acceptor" evidence="1">
    <location>
        <position position="133"/>
    </location>
</feature>
<feature type="active site" description="Schiff-base intermediate with substrate" evidence="1">
    <location>
        <position position="161"/>
    </location>
</feature>
<feature type="binding site" evidence="1">
    <location>
        <position position="45"/>
    </location>
    <ligand>
        <name>pyruvate</name>
        <dbReference type="ChEBI" id="CHEBI:15361"/>
    </ligand>
</feature>
<feature type="binding site" evidence="1">
    <location>
        <position position="203"/>
    </location>
    <ligand>
        <name>pyruvate</name>
        <dbReference type="ChEBI" id="CHEBI:15361"/>
    </ligand>
</feature>
<feature type="site" description="Part of a proton relay during catalysis" evidence="1">
    <location>
        <position position="44"/>
    </location>
</feature>
<feature type="site" description="Part of a proton relay during catalysis" evidence="1">
    <location>
        <position position="107"/>
    </location>
</feature>
<proteinExistence type="inferred from homology"/>
<keyword id="KW-0028">Amino-acid biosynthesis</keyword>
<keyword id="KW-0963">Cytoplasm</keyword>
<keyword id="KW-0220">Diaminopimelate biosynthesis</keyword>
<keyword id="KW-0456">Lyase</keyword>
<keyword id="KW-0457">Lysine biosynthesis</keyword>
<keyword id="KW-1185">Reference proteome</keyword>
<keyword id="KW-0704">Schiff base</keyword>
<gene>
    <name evidence="1" type="primary">dapA</name>
    <name type="ordered locus">AFE_2358</name>
</gene>
<comment type="function">
    <text evidence="1">Catalyzes the condensation of (S)-aspartate-beta-semialdehyde [(S)-ASA] and pyruvate to 4-hydroxy-tetrahydrodipicolinate (HTPA).</text>
</comment>
<comment type="catalytic activity">
    <reaction evidence="1">
        <text>L-aspartate 4-semialdehyde + pyruvate = (2S,4S)-4-hydroxy-2,3,4,5-tetrahydrodipicolinate + H2O + H(+)</text>
        <dbReference type="Rhea" id="RHEA:34171"/>
        <dbReference type="ChEBI" id="CHEBI:15361"/>
        <dbReference type="ChEBI" id="CHEBI:15377"/>
        <dbReference type="ChEBI" id="CHEBI:15378"/>
        <dbReference type="ChEBI" id="CHEBI:67139"/>
        <dbReference type="ChEBI" id="CHEBI:537519"/>
        <dbReference type="EC" id="4.3.3.7"/>
    </reaction>
</comment>
<comment type="pathway">
    <text evidence="1">Amino-acid biosynthesis; L-lysine biosynthesis via DAP pathway; (S)-tetrahydrodipicolinate from L-aspartate: step 3/4.</text>
</comment>
<comment type="subunit">
    <text evidence="1">Homotetramer; dimer of dimers.</text>
</comment>
<comment type="subcellular location">
    <subcellularLocation>
        <location evidence="1">Cytoplasm</location>
    </subcellularLocation>
</comment>
<comment type="similarity">
    <text evidence="1">Belongs to the DapA family.</text>
</comment>
<comment type="caution">
    <text evidence="2">Was originally thought to be a dihydrodipicolinate synthase (DHDPS), catalyzing the condensation of (S)-aspartate-beta-semialdehyde [(S)-ASA] and pyruvate to dihydrodipicolinate (DHDP). However, it was shown in E.coli that the product of the enzymatic reaction is not dihydrodipicolinate but in fact (4S)-4-hydroxy-2,3,4,5-tetrahydro-(2S)-dipicolinic acid (HTPA), and that the consecutive dehydration reaction leading to DHDP is not spontaneous but catalyzed by DapB.</text>
</comment>
<name>DAPA_ACIF2</name>
<evidence type="ECO:0000255" key="1">
    <source>
        <dbReference type="HAMAP-Rule" id="MF_00418"/>
    </source>
</evidence>
<evidence type="ECO:0000305" key="2"/>
<protein>
    <recommendedName>
        <fullName evidence="1">4-hydroxy-tetrahydrodipicolinate synthase</fullName>
        <shortName evidence="1">HTPA synthase</shortName>
        <ecNumber evidence="1">4.3.3.7</ecNumber>
    </recommendedName>
</protein>
<accession>B7J6C4</accession>
<reference key="1">
    <citation type="journal article" date="2008" name="BMC Genomics">
        <title>Acidithiobacillus ferrooxidans metabolism: from genome sequence to industrial applications.</title>
        <authorList>
            <person name="Valdes J."/>
            <person name="Pedroso I."/>
            <person name="Quatrini R."/>
            <person name="Dodson R.J."/>
            <person name="Tettelin H."/>
            <person name="Blake R. II"/>
            <person name="Eisen J.A."/>
            <person name="Holmes D.S."/>
        </authorList>
    </citation>
    <scope>NUCLEOTIDE SEQUENCE [LARGE SCALE GENOMIC DNA]</scope>
    <source>
        <strain>ATCC 23270 / DSM 14882 / CIP 104768 / NCIMB 8455</strain>
    </source>
</reference>
<organism>
    <name type="scientific">Acidithiobacillus ferrooxidans (strain ATCC 23270 / DSM 14882 / CIP 104768 / NCIMB 8455)</name>
    <name type="common">Ferrobacillus ferrooxidans (strain ATCC 23270)</name>
    <dbReference type="NCBI Taxonomy" id="243159"/>
    <lineage>
        <taxon>Bacteria</taxon>
        <taxon>Pseudomonadati</taxon>
        <taxon>Pseudomonadota</taxon>
        <taxon>Acidithiobacillia</taxon>
        <taxon>Acidithiobacillales</taxon>
        <taxon>Acidithiobacillaceae</taxon>
        <taxon>Acidithiobacillus</taxon>
    </lineage>
</organism>